<keyword id="KW-0067">ATP-binding</keyword>
<keyword id="KW-0194">Cyanelle</keyword>
<keyword id="KW-0547">Nucleotide-binding</keyword>
<keyword id="KW-0934">Plastid</keyword>
<keyword id="KW-0813">Transport</keyword>
<feature type="chain" id="PRO_0000093282" description="Probable ABC transporter ATP-binding protein in ycf23-apcF intergenic region">
    <location>
        <begin position="1"/>
        <end position="244"/>
    </location>
</feature>
<feature type="domain" description="ABC transporter" evidence="1">
    <location>
        <begin position="9"/>
        <end position="241"/>
    </location>
</feature>
<feature type="binding site" evidence="1">
    <location>
        <begin position="41"/>
        <end position="48"/>
    </location>
    <ligand>
        <name>ATP</name>
        <dbReference type="ChEBI" id="CHEBI:30616"/>
    </ligand>
</feature>
<reference key="1">
    <citation type="journal article" date="1995" name="Plant Mol. Biol. Rep.">
        <title>Nucleotide sequence of the cyanelle DNA from Cyanophora paradoxa.</title>
        <authorList>
            <person name="Stirewalt V.L."/>
            <person name="Michalowski C.B."/>
            <person name="Loeffelhardt W."/>
            <person name="Bohnert H.J."/>
            <person name="Bryant D.A."/>
        </authorList>
    </citation>
    <scope>NUCLEOTIDE SEQUENCE [LARGE SCALE GENOMIC DNA]</scope>
    <source>
        <strain>UTEX LB 555 / Pringsheim</strain>
    </source>
</reference>
<reference key="2">
    <citation type="book" date="1997" name="Eukaryotism and symbiosis">
        <title>The complete sequence of the cyanelle genome of Cyanophora paradoxa: the genetic complexity of a primitive plastid.</title>
        <editorList>
            <person name="Schenk H.E.A."/>
            <person name="Herrmann R."/>
            <person name="Jeon K.W."/>
            <person name="Mueller N.E."/>
            <person name="Schwemmler W."/>
        </editorList>
        <authorList>
            <person name="Loeffelhardt W."/>
            <person name="Stirewalt V.L."/>
            <person name="Michalowski C.B."/>
            <person name="Annarella M."/>
            <person name="Farley J.Y."/>
            <person name="Schluchter W.M."/>
            <person name="Chung S."/>
            <person name="Newmann-Spallart C."/>
            <person name="Steiner J.M."/>
            <person name="Jakowitsch J."/>
            <person name="Bohnert H.J."/>
            <person name="Bryant D.A."/>
        </authorList>
    </citation>
    <scope>NUCLEOTIDE SEQUENCE [LARGE SCALE GENOMIC DNA]</scope>
    <source>
        <strain>UTEX LB 555 / Pringsheim</strain>
    </source>
</reference>
<organism>
    <name type="scientific">Cyanophora paradoxa</name>
    <dbReference type="NCBI Taxonomy" id="2762"/>
    <lineage>
        <taxon>Eukaryota</taxon>
        <taxon>Glaucocystophyceae</taxon>
        <taxon>Cyanophoraceae</taxon>
        <taxon>Cyanophora</taxon>
    </lineage>
</organism>
<geneLocation type="cyanelle"/>
<evidence type="ECO:0000255" key="1">
    <source>
        <dbReference type="PROSITE-ProRule" id="PRU00434"/>
    </source>
</evidence>
<evidence type="ECO:0000305" key="2"/>
<proteinExistence type="inferred from homology"/>
<sequence>MFYTLPKQLEINNLTVSYPHGTVLQNIFLTIESGKLIGIIGPNGAGKSTLLKTIIEQIKPISGEIFYQGAPLKNQRARIGYVPQRAQVDWDFPINVWDVVMMARLKKIGWFSSYSKKSYECVKAALEKVDMLKYKDRNIRELSGGQQQRVFLARLLAQEADLLLLDEPFTGVDFQTQKIIFSLLKEQIASNKIVIVIHHDLGESIINFDELILLNKKIISHDLTTKILNSKKLSTLFGEHIYAN</sequence>
<name>YCXD_CYAPA</name>
<comment type="subcellular location">
    <subcellularLocation>
        <location>Plastid</location>
        <location>Cyanelle</location>
    </subcellularLocation>
</comment>
<comment type="similarity">
    <text evidence="2">Belongs to the ABC transporter superfamily.</text>
</comment>
<protein>
    <recommendedName>
        <fullName>Probable ABC transporter ATP-binding protein in ycf23-apcF intergenic region</fullName>
    </recommendedName>
    <alternativeName>
        <fullName>ORF244</fullName>
    </alternativeName>
</protein>
<dbReference type="EMBL" id="U30821">
    <property type="protein sequence ID" value="AAA81304.1"/>
    <property type="molecule type" value="Genomic_DNA"/>
</dbReference>
<dbReference type="PIR" id="T06961">
    <property type="entry name" value="T06961"/>
</dbReference>
<dbReference type="RefSeq" id="NP_043273.1">
    <property type="nucleotide sequence ID" value="NC_001675.1"/>
</dbReference>
<dbReference type="SMR" id="P48334"/>
<dbReference type="GeneID" id="1457212"/>
<dbReference type="GO" id="GO:0009842">
    <property type="term" value="C:cyanelle"/>
    <property type="evidence" value="ECO:0007669"/>
    <property type="project" value="UniProtKB-SubCell"/>
</dbReference>
<dbReference type="GO" id="GO:0005524">
    <property type="term" value="F:ATP binding"/>
    <property type="evidence" value="ECO:0007669"/>
    <property type="project" value="UniProtKB-KW"/>
</dbReference>
<dbReference type="GO" id="GO:0016887">
    <property type="term" value="F:ATP hydrolysis activity"/>
    <property type="evidence" value="ECO:0007669"/>
    <property type="project" value="InterPro"/>
</dbReference>
<dbReference type="CDD" id="cd03235">
    <property type="entry name" value="ABC_Metallic_Cations"/>
    <property type="match status" value="1"/>
</dbReference>
<dbReference type="FunFam" id="3.40.50.300:FF:000134">
    <property type="entry name" value="Iron-enterobactin ABC transporter ATP-binding protein"/>
    <property type="match status" value="1"/>
</dbReference>
<dbReference type="Gene3D" id="3.40.50.300">
    <property type="entry name" value="P-loop containing nucleotide triphosphate hydrolases"/>
    <property type="match status" value="1"/>
</dbReference>
<dbReference type="InterPro" id="IPR003593">
    <property type="entry name" value="AAA+_ATPase"/>
</dbReference>
<dbReference type="InterPro" id="IPR003439">
    <property type="entry name" value="ABC_transporter-like_ATP-bd"/>
</dbReference>
<dbReference type="InterPro" id="IPR017871">
    <property type="entry name" value="ABC_transporter-like_CS"/>
</dbReference>
<dbReference type="InterPro" id="IPR050153">
    <property type="entry name" value="Metal_Ion_Import_ABC"/>
</dbReference>
<dbReference type="InterPro" id="IPR027417">
    <property type="entry name" value="P-loop_NTPase"/>
</dbReference>
<dbReference type="PANTHER" id="PTHR42734:SF5">
    <property type="entry name" value="IRON TRANSPORT SYSTEM ATP-BINDING PROTEIN HI_0361-RELATED"/>
    <property type="match status" value="1"/>
</dbReference>
<dbReference type="PANTHER" id="PTHR42734">
    <property type="entry name" value="METAL TRANSPORT SYSTEM ATP-BINDING PROTEIN TM_0124-RELATED"/>
    <property type="match status" value="1"/>
</dbReference>
<dbReference type="Pfam" id="PF00005">
    <property type="entry name" value="ABC_tran"/>
    <property type="match status" value="1"/>
</dbReference>
<dbReference type="SMART" id="SM00382">
    <property type="entry name" value="AAA"/>
    <property type="match status" value="1"/>
</dbReference>
<dbReference type="SUPFAM" id="SSF52540">
    <property type="entry name" value="P-loop containing nucleoside triphosphate hydrolases"/>
    <property type="match status" value="1"/>
</dbReference>
<dbReference type="PROSITE" id="PS00211">
    <property type="entry name" value="ABC_TRANSPORTER_1"/>
    <property type="match status" value="1"/>
</dbReference>
<dbReference type="PROSITE" id="PS50893">
    <property type="entry name" value="ABC_TRANSPORTER_2"/>
    <property type="match status" value="1"/>
</dbReference>
<accession>P48334</accession>